<gene>
    <name type="primary">CDC48C</name>
    <name type="synonym">EMB1354</name>
    <name type="ordered locus">At3g01610</name>
    <name type="ORF">F4P13.15</name>
</gene>
<sequence length="820" mass="90005">MGRRGRGGGGGMGGGINRRYLSQVMDTCGKDLSTAEDIVDDLRSRYGNFARLTRQVLLLNVRQVLNVRNNKRVKDEDEDDNIGDEEGSASQRKKQRRVDEKEEKLQRAEQSHLRKRNMERSVSSSPSSSSSSEDSGDVSTSEDAVYGEKLSPPRFDLINDSLRDNYAKLNSSSKKPIGSPAEKNVEVETVSNKGRSKLATMGARKEAKVSLSLSGATGNGDLEVEGTKGPTFKDFGGIKKILDELEMNVLFPILNPEPFKKIGVKPPSGILFHGPPGCGKTKLANAIANEAGVPFYKISATEVISGVSGASEENIRELFSKAYRTAPSIVFIDEIDAIGSKRENQQREMEKRIVTQLLTCMDGPGNKGDKNAPDSSAGFVLVIGATNRPDALDPALRRSGRFETEIALTAPDEDARAEILSVVAQKLRLEGPFDKKRIARLTPGFVGADLESVAYLAGRKAIKRILDSRKSEQSGDGEDDKSWLRMPWPEEELEKLFVKMSDFEEAVNLVQASLTREGFSIVPDVKWDDVGGLDHLRLQFNRYIVRPIKKPDIYKAFGVDLETGFLLYGPPGCGKTLIAKAAANEAGANFMHIKGAELLNKYVGESELAIRTLFQRARTCAPCVIFFDEVDALTTSRGKEGAWVVERLLNQFLVELDGGERRNVYVIGATNRPDVVDPAFLRPGRFGNLLYVPLPNADERASILKAIARKKPIDPSVDLDGIAKNNCEGFSGADLAHLVQKATFQAVEEMIGSSESSEDDVTDITQCTIKTRHFEQALSLVSPSVNKQQRRHYDALSTKLQESVGRNTEQVTIGPSFTLE</sequence>
<feature type="chain" id="PRO_0000084581" description="Cell division control protein 48 homolog C">
    <location>
        <begin position="1"/>
        <end position="820"/>
    </location>
</feature>
<feature type="region of interest" description="Disordered" evidence="3">
    <location>
        <begin position="72"/>
        <end position="157"/>
    </location>
</feature>
<feature type="region of interest" description="Disordered" evidence="3">
    <location>
        <begin position="169"/>
        <end position="188"/>
    </location>
</feature>
<feature type="coiled-coil region" evidence="2">
    <location>
        <begin position="85"/>
        <end position="122"/>
    </location>
</feature>
<feature type="compositionally biased region" description="Acidic residues" evidence="3">
    <location>
        <begin position="76"/>
        <end position="87"/>
    </location>
</feature>
<feature type="compositionally biased region" description="Basic and acidic residues" evidence="3">
    <location>
        <begin position="97"/>
        <end position="119"/>
    </location>
</feature>
<feature type="compositionally biased region" description="Low complexity" evidence="3">
    <location>
        <begin position="121"/>
        <end position="142"/>
    </location>
</feature>
<feature type="binding site" evidence="2">
    <location>
        <begin position="274"/>
        <end position="281"/>
    </location>
    <ligand>
        <name>ATP</name>
        <dbReference type="ChEBI" id="CHEBI:30616"/>
    </ligand>
</feature>
<feature type="binding site" evidence="2">
    <location>
        <begin position="569"/>
        <end position="576"/>
    </location>
    <ligand>
        <name>ATP</name>
        <dbReference type="ChEBI" id="CHEBI:30616"/>
    </ligand>
</feature>
<feature type="sequence conflict" description="In Ref. 3; AAN72146." evidence="4" ref="3">
    <location>
        <position position="7"/>
    </location>
</feature>
<comment type="function">
    <text evidence="1">Probably functions in cell division and growth processes. Interacts with certain SNAREs as part of specialized membrane fusion events where vesicles from the same organelle fuse (homotypic fusion) (By similarity).</text>
</comment>
<comment type="subcellular location">
    <subcellularLocation>
        <location evidence="1">Nucleus</location>
    </subcellularLocation>
    <subcellularLocation>
        <location evidence="1">Cytoplasm</location>
        <location evidence="1">Cytoskeleton</location>
        <location evidence="1">Phragmoplast</location>
    </subcellularLocation>
    <text evidence="1">Primarily localized to the nucleus and, during cytokinesis, to the phragmoplast, a site where membrane vesicles are targeted in the deposition of new cell wall materials.</text>
</comment>
<comment type="similarity">
    <text evidence="4">Belongs to the AAA ATPase family.</text>
</comment>
<name>CD48C_ARATH</name>
<keyword id="KW-0067">ATP-binding</keyword>
<keyword id="KW-0131">Cell cycle</keyword>
<keyword id="KW-0132">Cell division</keyword>
<keyword id="KW-0175">Coiled coil</keyword>
<keyword id="KW-0963">Cytoplasm</keyword>
<keyword id="KW-0206">Cytoskeleton</keyword>
<keyword id="KW-0547">Nucleotide-binding</keyword>
<keyword id="KW-0539">Nucleus</keyword>
<keyword id="KW-0653">Protein transport</keyword>
<keyword id="KW-1185">Reference proteome</keyword>
<keyword id="KW-0677">Repeat</keyword>
<keyword id="KW-0813">Transport</keyword>
<protein>
    <recommendedName>
        <fullName>Cell division control protein 48 homolog C</fullName>
        <shortName>AtCDC48c</shortName>
    </recommendedName>
    <alternativeName>
        <fullName>Protein EMBRYO DEFECTIVE 1354</fullName>
    </alternativeName>
</protein>
<accession>Q9SS94</accession>
<accession>Q8L769</accession>
<proteinExistence type="evidence at transcript level"/>
<organism>
    <name type="scientific">Arabidopsis thaliana</name>
    <name type="common">Mouse-ear cress</name>
    <dbReference type="NCBI Taxonomy" id="3702"/>
    <lineage>
        <taxon>Eukaryota</taxon>
        <taxon>Viridiplantae</taxon>
        <taxon>Streptophyta</taxon>
        <taxon>Embryophyta</taxon>
        <taxon>Tracheophyta</taxon>
        <taxon>Spermatophyta</taxon>
        <taxon>Magnoliopsida</taxon>
        <taxon>eudicotyledons</taxon>
        <taxon>Gunneridae</taxon>
        <taxon>Pentapetalae</taxon>
        <taxon>rosids</taxon>
        <taxon>malvids</taxon>
        <taxon>Brassicales</taxon>
        <taxon>Brassicaceae</taxon>
        <taxon>Camelineae</taxon>
        <taxon>Arabidopsis</taxon>
    </lineage>
</organism>
<dbReference type="EMBL" id="AC009325">
    <property type="protein sequence ID" value="AAF01545.1"/>
    <property type="molecule type" value="Genomic_DNA"/>
</dbReference>
<dbReference type="EMBL" id="CP002686">
    <property type="protein sequence ID" value="AEE73695.1"/>
    <property type="molecule type" value="Genomic_DNA"/>
</dbReference>
<dbReference type="EMBL" id="AY136443">
    <property type="protein sequence ID" value="AAM97108.1"/>
    <property type="molecule type" value="mRNA"/>
</dbReference>
<dbReference type="EMBL" id="BT002135">
    <property type="protein sequence ID" value="AAN72146.1"/>
    <property type="molecule type" value="mRNA"/>
</dbReference>
<dbReference type="RefSeq" id="NP_186810.2">
    <property type="nucleotide sequence ID" value="NM_111027.4"/>
</dbReference>
<dbReference type="SMR" id="Q9SS94"/>
<dbReference type="BioGRID" id="6438">
    <property type="interactions" value="3"/>
</dbReference>
<dbReference type="FunCoup" id="Q9SS94">
    <property type="interactions" value="3693"/>
</dbReference>
<dbReference type="IntAct" id="Q9SS94">
    <property type="interactions" value="1"/>
</dbReference>
<dbReference type="STRING" id="3702.Q9SS94"/>
<dbReference type="TCDB" id="3.A.16.1.5">
    <property type="family name" value="the endoplasmic reticular retrotranslocon (er-rt) family"/>
</dbReference>
<dbReference type="iPTMnet" id="Q9SS94"/>
<dbReference type="PaxDb" id="3702-AT3G01610.1"/>
<dbReference type="ProteomicsDB" id="223920"/>
<dbReference type="EnsemblPlants" id="AT3G01610.1">
    <property type="protein sequence ID" value="AT3G01610.1"/>
    <property type="gene ID" value="AT3G01610"/>
</dbReference>
<dbReference type="GeneID" id="821105"/>
<dbReference type="Gramene" id="AT3G01610.1">
    <property type="protein sequence ID" value="AT3G01610.1"/>
    <property type="gene ID" value="AT3G01610"/>
</dbReference>
<dbReference type="KEGG" id="ath:AT3G01610"/>
<dbReference type="Araport" id="AT3G01610"/>
<dbReference type="TAIR" id="AT3G01610">
    <property type="gene designation" value="CDC48C"/>
</dbReference>
<dbReference type="eggNOG" id="KOG0733">
    <property type="taxonomic scope" value="Eukaryota"/>
</dbReference>
<dbReference type="HOGENOM" id="CLU_000688_8_3_1"/>
<dbReference type="InParanoid" id="Q9SS94"/>
<dbReference type="OMA" id="MESNSAM"/>
<dbReference type="OrthoDB" id="27435at2759"/>
<dbReference type="PhylomeDB" id="Q9SS94"/>
<dbReference type="PRO" id="PR:Q9SS94"/>
<dbReference type="Proteomes" id="UP000006548">
    <property type="component" value="Chromosome 3"/>
</dbReference>
<dbReference type="ExpressionAtlas" id="Q9SS94">
    <property type="expression patterns" value="baseline and differential"/>
</dbReference>
<dbReference type="GO" id="GO:0005856">
    <property type="term" value="C:cytoskeleton"/>
    <property type="evidence" value="ECO:0007669"/>
    <property type="project" value="UniProtKB-KW"/>
</dbReference>
<dbReference type="GO" id="GO:0005634">
    <property type="term" value="C:nucleus"/>
    <property type="evidence" value="ECO:0007669"/>
    <property type="project" value="UniProtKB-SubCell"/>
</dbReference>
<dbReference type="GO" id="GO:0009524">
    <property type="term" value="C:phragmoplast"/>
    <property type="evidence" value="ECO:0007669"/>
    <property type="project" value="UniProtKB-SubCell"/>
</dbReference>
<dbReference type="GO" id="GO:0005524">
    <property type="term" value="F:ATP binding"/>
    <property type="evidence" value="ECO:0007669"/>
    <property type="project" value="UniProtKB-KW"/>
</dbReference>
<dbReference type="GO" id="GO:0016887">
    <property type="term" value="F:ATP hydrolysis activity"/>
    <property type="evidence" value="ECO:0007669"/>
    <property type="project" value="InterPro"/>
</dbReference>
<dbReference type="GO" id="GO:0051301">
    <property type="term" value="P:cell division"/>
    <property type="evidence" value="ECO:0007669"/>
    <property type="project" value="UniProtKB-KW"/>
</dbReference>
<dbReference type="GO" id="GO:0015031">
    <property type="term" value="P:protein transport"/>
    <property type="evidence" value="ECO:0007669"/>
    <property type="project" value="UniProtKB-KW"/>
</dbReference>
<dbReference type="CDD" id="cd19518">
    <property type="entry name" value="RecA-like_NVL_r1-like"/>
    <property type="match status" value="1"/>
</dbReference>
<dbReference type="FunFam" id="3.40.50.300:FF:000567">
    <property type="entry name" value="ATPase, AAA family protein"/>
    <property type="match status" value="1"/>
</dbReference>
<dbReference type="FunFam" id="3.40.50.300:FF:000365">
    <property type="entry name" value="Ribosome biogenesis ATPase RIX7"/>
    <property type="match status" value="1"/>
</dbReference>
<dbReference type="Gene3D" id="1.10.8.60">
    <property type="match status" value="2"/>
</dbReference>
<dbReference type="Gene3D" id="3.40.50.300">
    <property type="entry name" value="P-loop containing nucleotide triphosphate hydrolases"/>
    <property type="match status" value="2"/>
</dbReference>
<dbReference type="InterPro" id="IPR003593">
    <property type="entry name" value="AAA+_ATPase"/>
</dbReference>
<dbReference type="InterPro" id="IPR041569">
    <property type="entry name" value="AAA_lid_3"/>
</dbReference>
<dbReference type="InterPro" id="IPR003959">
    <property type="entry name" value="ATPase_AAA_core"/>
</dbReference>
<dbReference type="InterPro" id="IPR003960">
    <property type="entry name" value="ATPase_AAA_CS"/>
</dbReference>
<dbReference type="InterPro" id="IPR055278">
    <property type="entry name" value="CDC48c"/>
</dbReference>
<dbReference type="InterPro" id="IPR027417">
    <property type="entry name" value="P-loop_NTPase"/>
</dbReference>
<dbReference type="PANTHER" id="PTHR48470">
    <property type="entry name" value="CELL DIVISION CONTROL PROTEIN 48 C ISOFORM 1"/>
    <property type="match status" value="1"/>
</dbReference>
<dbReference type="PANTHER" id="PTHR48470:SF1">
    <property type="entry name" value="CELL DIVISION CONTROL PROTEIN 48 C ISOFORM 1"/>
    <property type="match status" value="1"/>
</dbReference>
<dbReference type="Pfam" id="PF00004">
    <property type="entry name" value="AAA"/>
    <property type="match status" value="2"/>
</dbReference>
<dbReference type="Pfam" id="PF17862">
    <property type="entry name" value="AAA_lid_3"/>
    <property type="match status" value="2"/>
</dbReference>
<dbReference type="SMART" id="SM00382">
    <property type="entry name" value="AAA"/>
    <property type="match status" value="2"/>
</dbReference>
<dbReference type="SUPFAM" id="SSF52540">
    <property type="entry name" value="P-loop containing nucleoside triphosphate hydrolases"/>
    <property type="match status" value="2"/>
</dbReference>
<dbReference type="PROSITE" id="PS00674">
    <property type="entry name" value="AAA"/>
    <property type="match status" value="2"/>
</dbReference>
<reference key="1">
    <citation type="journal article" date="2000" name="Nature">
        <title>Sequence and analysis of chromosome 3 of the plant Arabidopsis thaliana.</title>
        <authorList>
            <person name="Salanoubat M."/>
            <person name="Lemcke K."/>
            <person name="Rieger M."/>
            <person name="Ansorge W."/>
            <person name="Unseld M."/>
            <person name="Fartmann B."/>
            <person name="Valle G."/>
            <person name="Bloecker H."/>
            <person name="Perez-Alonso M."/>
            <person name="Obermaier B."/>
            <person name="Delseny M."/>
            <person name="Boutry M."/>
            <person name="Grivell L.A."/>
            <person name="Mache R."/>
            <person name="Puigdomenech P."/>
            <person name="De Simone V."/>
            <person name="Choisne N."/>
            <person name="Artiguenave F."/>
            <person name="Robert C."/>
            <person name="Brottier P."/>
            <person name="Wincker P."/>
            <person name="Cattolico L."/>
            <person name="Weissenbach J."/>
            <person name="Saurin W."/>
            <person name="Quetier F."/>
            <person name="Schaefer M."/>
            <person name="Mueller-Auer S."/>
            <person name="Gabel C."/>
            <person name="Fuchs M."/>
            <person name="Benes V."/>
            <person name="Wurmbach E."/>
            <person name="Drzonek H."/>
            <person name="Erfle H."/>
            <person name="Jordan N."/>
            <person name="Bangert S."/>
            <person name="Wiedelmann R."/>
            <person name="Kranz H."/>
            <person name="Voss H."/>
            <person name="Holland R."/>
            <person name="Brandt P."/>
            <person name="Nyakatura G."/>
            <person name="Vezzi A."/>
            <person name="D'Angelo M."/>
            <person name="Pallavicini A."/>
            <person name="Toppo S."/>
            <person name="Simionati B."/>
            <person name="Conrad A."/>
            <person name="Hornischer K."/>
            <person name="Kauer G."/>
            <person name="Loehnert T.-H."/>
            <person name="Nordsiek G."/>
            <person name="Reichelt J."/>
            <person name="Scharfe M."/>
            <person name="Schoen O."/>
            <person name="Bargues M."/>
            <person name="Terol J."/>
            <person name="Climent J."/>
            <person name="Navarro P."/>
            <person name="Collado C."/>
            <person name="Perez-Perez A."/>
            <person name="Ottenwaelder B."/>
            <person name="Duchemin D."/>
            <person name="Cooke R."/>
            <person name="Laudie M."/>
            <person name="Berger-Llauro C."/>
            <person name="Purnelle B."/>
            <person name="Masuy D."/>
            <person name="de Haan M."/>
            <person name="Maarse A.C."/>
            <person name="Alcaraz J.-P."/>
            <person name="Cottet A."/>
            <person name="Casacuberta E."/>
            <person name="Monfort A."/>
            <person name="Argiriou A."/>
            <person name="Flores M."/>
            <person name="Liguori R."/>
            <person name="Vitale D."/>
            <person name="Mannhaupt G."/>
            <person name="Haase D."/>
            <person name="Schoof H."/>
            <person name="Rudd S."/>
            <person name="Zaccaria P."/>
            <person name="Mewes H.-W."/>
            <person name="Mayer K.F.X."/>
            <person name="Kaul S."/>
            <person name="Town C.D."/>
            <person name="Koo H.L."/>
            <person name="Tallon L.J."/>
            <person name="Jenkins J."/>
            <person name="Rooney T."/>
            <person name="Rizzo M."/>
            <person name="Walts A."/>
            <person name="Utterback T."/>
            <person name="Fujii C.Y."/>
            <person name="Shea T.P."/>
            <person name="Creasy T.H."/>
            <person name="Haas B."/>
            <person name="Maiti R."/>
            <person name="Wu D."/>
            <person name="Peterson J."/>
            <person name="Van Aken S."/>
            <person name="Pai G."/>
            <person name="Militscher J."/>
            <person name="Sellers P."/>
            <person name="Gill J.E."/>
            <person name="Feldblyum T.V."/>
            <person name="Preuss D."/>
            <person name="Lin X."/>
            <person name="Nierman W.C."/>
            <person name="Salzberg S.L."/>
            <person name="White O."/>
            <person name="Venter J.C."/>
            <person name="Fraser C.M."/>
            <person name="Kaneko T."/>
            <person name="Nakamura Y."/>
            <person name="Sato S."/>
            <person name="Kato T."/>
            <person name="Asamizu E."/>
            <person name="Sasamoto S."/>
            <person name="Kimura T."/>
            <person name="Idesawa K."/>
            <person name="Kawashima K."/>
            <person name="Kishida Y."/>
            <person name="Kiyokawa C."/>
            <person name="Kohara M."/>
            <person name="Matsumoto M."/>
            <person name="Matsuno A."/>
            <person name="Muraki A."/>
            <person name="Nakayama S."/>
            <person name="Nakazaki N."/>
            <person name="Shinpo S."/>
            <person name="Takeuchi C."/>
            <person name="Wada T."/>
            <person name="Watanabe A."/>
            <person name="Yamada M."/>
            <person name="Yasuda M."/>
            <person name="Tabata S."/>
        </authorList>
    </citation>
    <scope>NUCLEOTIDE SEQUENCE [LARGE SCALE GENOMIC DNA]</scope>
    <source>
        <strain>cv. Columbia</strain>
    </source>
</reference>
<reference key="2">
    <citation type="journal article" date="2017" name="Plant J.">
        <title>Araport11: a complete reannotation of the Arabidopsis thaliana reference genome.</title>
        <authorList>
            <person name="Cheng C.Y."/>
            <person name="Krishnakumar V."/>
            <person name="Chan A.P."/>
            <person name="Thibaud-Nissen F."/>
            <person name="Schobel S."/>
            <person name="Town C.D."/>
        </authorList>
    </citation>
    <scope>GENOME REANNOTATION</scope>
    <source>
        <strain>cv. Columbia</strain>
    </source>
</reference>
<reference key="3">
    <citation type="journal article" date="2003" name="Science">
        <title>Empirical analysis of transcriptional activity in the Arabidopsis genome.</title>
        <authorList>
            <person name="Yamada K."/>
            <person name="Lim J."/>
            <person name="Dale J.M."/>
            <person name="Chen H."/>
            <person name="Shinn P."/>
            <person name="Palm C.J."/>
            <person name="Southwick A.M."/>
            <person name="Wu H.C."/>
            <person name="Kim C.J."/>
            <person name="Nguyen M."/>
            <person name="Pham P.K."/>
            <person name="Cheuk R.F."/>
            <person name="Karlin-Newmann G."/>
            <person name="Liu S.X."/>
            <person name="Lam B."/>
            <person name="Sakano H."/>
            <person name="Wu T."/>
            <person name="Yu G."/>
            <person name="Miranda M."/>
            <person name="Quach H.L."/>
            <person name="Tripp M."/>
            <person name="Chang C.H."/>
            <person name="Lee J.M."/>
            <person name="Toriumi M.J."/>
            <person name="Chan M.M."/>
            <person name="Tang C.C."/>
            <person name="Onodera C.S."/>
            <person name="Deng J.M."/>
            <person name="Akiyama K."/>
            <person name="Ansari Y."/>
            <person name="Arakawa T."/>
            <person name="Banh J."/>
            <person name="Banno F."/>
            <person name="Bowser L."/>
            <person name="Brooks S.Y."/>
            <person name="Carninci P."/>
            <person name="Chao Q."/>
            <person name="Choy N."/>
            <person name="Enju A."/>
            <person name="Goldsmith A.D."/>
            <person name="Gurjal M."/>
            <person name="Hansen N.F."/>
            <person name="Hayashizaki Y."/>
            <person name="Johnson-Hopson C."/>
            <person name="Hsuan V.W."/>
            <person name="Iida K."/>
            <person name="Karnes M."/>
            <person name="Khan S."/>
            <person name="Koesema E."/>
            <person name="Ishida J."/>
            <person name="Jiang P.X."/>
            <person name="Jones T."/>
            <person name="Kawai J."/>
            <person name="Kamiya A."/>
            <person name="Meyers C."/>
            <person name="Nakajima M."/>
            <person name="Narusaka M."/>
            <person name="Seki M."/>
            <person name="Sakurai T."/>
            <person name="Satou M."/>
            <person name="Tamse R."/>
            <person name="Vaysberg M."/>
            <person name="Wallender E.K."/>
            <person name="Wong C."/>
            <person name="Yamamura Y."/>
            <person name="Yuan S."/>
            <person name="Shinozaki K."/>
            <person name="Davis R.W."/>
            <person name="Theologis A."/>
            <person name="Ecker J.R."/>
        </authorList>
    </citation>
    <scope>NUCLEOTIDE SEQUENCE [LARGE SCALE MRNA]</scope>
    <source>
        <strain>cv. Columbia</strain>
    </source>
</reference>
<evidence type="ECO:0000250" key="1"/>
<evidence type="ECO:0000255" key="2"/>
<evidence type="ECO:0000256" key="3">
    <source>
        <dbReference type="SAM" id="MobiDB-lite"/>
    </source>
</evidence>
<evidence type="ECO:0000305" key="4"/>